<name>COBS_PSEU2</name>
<sequence>MLPFWIALQFLGSLPIRLPGMPSPEELGRSLLFYPLVGAVFGTLLLGFNTLLSGAPLMLHAALVLTAWVLLSGGLHLDGLADSADAWLGGFGDRERTLKIMKDPRSGPIAVVTLVLVLLLKFAAILALIESHASVWLLLAPVIGRAAMLGLFLGTPYVRSGGLGQALADHLPRGPGRKVLLATAIACVLLAGWSGVAVLLVCAVCFFWLRQLMMRRLGGCTGDTAGALLELLELAVLLTLALL</sequence>
<evidence type="ECO:0000255" key="1">
    <source>
        <dbReference type="HAMAP-Rule" id="MF_00719"/>
    </source>
</evidence>
<proteinExistence type="inferred from homology"/>
<organism>
    <name type="scientific">Pseudomonas syringae pv. syringae (strain B728a)</name>
    <dbReference type="NCBI Taxonomy" id="205918"/>
    <lineage>
        <taxon>Bacteria</taxon>
        <taxon>Pseudomonadati</taxon>
        <taxon>Pseudomonadota</taxon>
        <taxon>Gammaproteobacteria</taxon>
        <taxon>Pseudomonadales</taxon>
        <taxon>Pseudomonadaceae</taxon>
        <taxon>Pseudomonas</taxon>
        <taxon>Pseudomonas syringae</taxon>
    </lineage>
</organism>
<gene>
    <name evidence="1" type="primary">cobS</name>
    <name type="ordered locus">Psyr_3672</name>
</gene>
<accession>Q4ZQ68</accession>
<protein>
    <recommendedName>
        <fullName evidence="1">Adenosylcobinamide-GDP ribazoletransferase</fullName>
        <ecNumber evidence="1">2.7.8.26</ecNumber>
    </recommendedName>
    <alternativeName>
        <fullName evidence="1">Cobalamin synthase</fullName>
    </alternativeName>
    <alternativeName>
        <fullName evidence="1">Cobalamin-5'-phosphate synthase</fullName>
    </alternativeName>
</protein>
<dbReference type="EC" id="2.7.8.26" evidence="1"/>
<dbReference type="EMBL" id="CP000075">
    <property type="protein sequence ID" value="AAY38704.1"/>
    <property type="molecule type" value="Genomic_DNA"/>
</dbReference>
<dbReference type="RefSeq" id="WP_003404265.1">
    <property type="nucleotide sequence ID" value="NC_007005.1"/>
</dbReference>
<dbReference type="RefSeq" id="YP_236742.1">
    <property type="nucleotide sequence ID" value="NC_007005.1"/>
</dbReference>
<dbReference type="STRING" id="205918.Psyr_3672"/>
<dbReference type="KEGG" id="psb:Psyr_3672"/>
<dbReference type="PATRIC" id="fig|205918.7.peg.3773"/>
<dbReference type="eggNOG" id="COG0368">
    <property type="taxonomic scope" value="Bacteria"/>
</dbReference>
<dbReference type="HOGENOM" id="CLU_057426_3_1_6"/>
<dbReference type="OrthoDB" id="9794626at2"/>
<dbReference type="UniPathway" id="UPA00148">
    <property type="reaction ID" value="UER00238"/>
</dbReference>
<dbReference type="Proteomes" id="UP000000426">
    <property type="component" value="Chromosome"/>
</dbReference>
<dbReference type="GO" id="GO:0005886">
    <property type="term" value="C:plasma membrane"/>
    <property type="evidence" value="ECO:0007669"/>
    <property type="project" value="UniProtKB-SubCell"/>
</dbReference>
<dbReference type="GO" id="GO:0051073">
    <property type="term" value="F:adenosylcobinamide-GDP ribazoletransferase activity"/>
    <property type="evidence" value="ECO:0007669"/>
    <property type="project" value="UniProtKB-UniRule"/>
</dbReference>
<dbReference type="GO" id="GO:0008818">
    <property type="term" value="F:cobalamin 5'-phosphate synthase activity"/>
    <property type="evidence" value="ECO:0007669"/>
    <property type="project" value="UniProtKB-UniRule"/>
</dbReference>
<dbReference type="GO" id="GO:0009236">
    <property type="term" value="P:cobalamin biosynthetic process"/>
    <property type="evidence" value="ECO:0007669"/>
    <property type="project" value="UniProtKB-UniRule"/>
</dbReference>
<dbReference type="HAMAP" id="MF_00719">
    <property type="entry name" value="CobS"/>
    <property type="match status" value="1"/>
</dbReference>
<dbReference type="InterPro" id="IPR003805">
    <property type="entry name" value="CobS"/>
</dbReference>
<dbReference type="NCBIfam" id="TIGR00317">
    <property type="entry name" value="cobS"/>
    <property type="match status" value="1"/>
</dbReference>
<dbReference type="NCBIfam" id="NF001278">
    <property type="entry name" value="PRK00235.1-5"/>
    <property type="match status" value="1"/>
</dbReference>
<dbReference type="PANTHER" id="PTHR34148">
    <property type="entry name" value="ADENOSYLCOBINAMIDE-GDP RIBAZOLETRANSFERASE"/>
    <property type="match status" value="1"/>
</dbReference>
<dbReference type="PANTHER" id="PTHR34148:SF1">
    <property type="entry name" value="ADENOSYLCOBINAMIDE-GDP RIBAZOLETRANSFERASE"/>
    <property type="match status" value="1"/>
</dbReference>
<dbReference type="Pfam" id="PF02654">
    <property type="entry name" value="CobS"/>
    <property type="match status" value="1"/>
</dbReference>
<feature type="chain" id="PRO_1000045793" description="Adenosylcobinamide-GDP ribazoletransferase">
    <location>
        <begin position="1"/>
        <end position="243"/>
    </location>
</feature>
<feature type="transmembrane region" description="Helical" evidence="1">
    <location>
        <begin position="31"/>
        <end position="51"/>
    </location>
</feature>
<feature type="transmembrane region" description="Helical" evidence="1">
    <location>
        <begin position="55"/>
        <end position="75"/>
    </location>
</feature>
<feature type="transmembrane region" description="Helical" evidence="1">
    <location>
        <begin position="109"/>
        <end position="129"/>
    </location>
</feature>
<feature type="transmembrane region" description="Helical" evidence="1">
    <location>
        <begin position="133"/>
        <end position="153"/>
    </location>
</feature>
<feature type="transmembrane region" description="Helical" evidence="1">
    <location>
        <begin position="188"/>
        <end position="208"/>
    </location>
</feature>
<comment type="function">
    <text evidence="1">Joins adenosylcobinamide-GDP and alpha-ribazole to generate adenosylcobalamin (Ado-cobalamin). Also synthesizes adenosylcobalamin 5'-phosphate from adenosylcobinamide-GDP and alpha-ribazole 5'-phosphate.</text>
</comment>
<comment type="catalytic activity">
    <reaction evidence="1">
        <text>alpha-ribazole + adenosylcob(III)inamide-GDP = adenosylcob(III)alamin + GMP + H(+)</text>
        <dbReference type="Rhea" id="RHEA:16049"/>
        <dbReference type="ChEBI" id="CHEBI:10329"/>
        <dbReference type="ChEBI" id="CHEBI:15378"/>
        <dbReference type="ChEBI" id="CHEBI:18408"/>
        <dbReference type="ChEBI" id="CHEBI:58115"/>
        <dbReference type="ChEBI" id="CHEBI:60487"/>
        <dbReference type="EC" id="2.7.8.26"/>
    </reaction>
</comment>
<comment type="catalytic activity">
    <reaction evidence="1">
        <text>alpha-ribazole 5'-phosphate + adenosylcob(III)inamide-GDP = adenosylcob(III)alamin 5'-phosphate + GMP + H(+)</text>
        <dbReference type="Rhea" id="RHEA:23560"/>
        <dbReference type="ChEBI" id="CHEBI:15378"/>
        <dbReference type="ChEBI" id="CHEBI:57918"/>
        <dbReference type="ChEBI" id="CHEBI:58115"/>
        <dbReference type="ChEBI" id="CHEBI:60487"/>
        <dbReference type="ChEBI" id="CHEBI:60493"/>
        <dbReference type="EC" id="2.7.8.26"/>
    </reaction>
</comment>
<comment type="cofactor">
    <cofactor evidence="1">
        <name>Mg(2+)</name>
        <dbReference type="ChEBI" id="CHEBI:18420"/>
    </cofactor>
</comment>
<comment type="pathway">
    <text evidence="1">Cofactor biosynthesis; adenosylcobalamin biosynthesis; adenosylcobalamin from cob(II)yrinate a,c-diamide: step 7/7.</text>
</comment>
<comment type="subcellular location">
    <subcellularLocation>
        <location evidence="1">Cell inner membrane</location>
        <topology evidence="1">Multi-pass membrane protein</topology>
    </subcellularLocation>
</comment>
<comment type="similarity">
    <text evidence="1">Belongs to the CobS family.</text>
</comment>
<reference key="1">
    <citation type="journal article" date="2005" name="Proc. Natl. Acad. Sci. U.S.A.">
        <title>Comparison of the complete genome sequences of Pseudomonas syringae pv. syringae B728a and pv. tomato DC3000.</title>
        <authorList>
            <person name="Feil H."/>
            <person name="Feil W.S."/>
            <person name="Chain P."/>
            <person name="Larimer F."/>
            <person name="Dibartolo G."/>
            <person name="Copeland A."/>
            <person name="Lykidis A."/>
            <person name="Trong S."/>
            <person name="Nolan M."/>
            <person name="Goltsman E."/>
            <person name="Thiel J."/>
            <person name="Malfatti S."/>
            <person name="Loper J.E."/>
            <person name="Lapidus A."/>
            <person name="Detter J.C."/>
            <person name="Land M."/>
            <person name="Richardson P.M."/>
            <person name="Kyrpides N.C."/>
            <person name="Ivanova N."/>
            <person name="Lindow S.E."/>
        </authorList>
    </citation>
    <scope>NUCLEOTIDE SEQUENCE [LARGE SCALE GENOMIC DNA]</scope>
    <source>
        <strain>B728a</strain>
    </source>
</reference>
<keyword id="KW-0997">Cell inner membrane</keyword>
<keyword id="KW-1003">Cell membrane</keyword>
<keyword id="KW-0169">Cobalamin biosynthesis</keyword>
<keyword id="KW-0460">Magnesium</keyword>
<keyword id="KW-0472">Membrane</keyword>
<keyword id="KW-0808">Transferase</keyword>
<keyword id="KW-0812">Transmembrane</keyword>
<keyword id="KW-1133">Transmembrane helix</keyword>